<proteinExistence type="inferred from homology"/>
<gene>
    <name evidence="1" type="primary">rpoA</name>
</gene>
<feature type="chain" id="PRO_0000275695" description="DNA-directed RNA polymerase subunit alpha">
    <location>
        <begin position="1"/>
        <end position="339"/>
    </location>
</feature>
<feature type="region of interest" description="Alpha N-terminal domain (alpha-NTD)" evidence="1">
    <location>
        <begin position="1"/>
        <end position="233"/>
    </location>
</feature>
<feature type="region of interest" description="Alpha C-terminal domain (alpha-CTD)" evidence="1">
    <location>
        <begin position="266"/>
        <end position="339"/>
    </location>
</feature>
<organism>
    <name type="scientific">Sorghum bicolor</name>
    <name type="common">Sorghum</name>
    <name type="synonym">Sorghum vulgare</name>
    <dbReference type="NCBI Taxonomy" id="4558"/>
    <lineage>
        <taxon>Eukaryota</taxon>
        <taxon>Viridiplantae</taxon>
        <taxon>Streptophyta</taxon>
        <taxon>Embryophyta</taxon>
        <taxon>Tracheophyta</taxon>
        <taxon>Spermatophyta</taxon>
        <taxon>Magnoliopsida</taxon>
        <taxon>Liliopsida</taxon>
        <taxon>Poales</taxon>
        <taxon>Poaceae</taxon>
        <taxon>PACMAD clade</taxon>
        <taxon>Panicoideae</taxon>
        <taxon>Andropogonodae</taxon>
        <taxon>Andropogoneae</taxon>
        <taxon>Sorghinae</taxon>
        <taxon>Sorghum</taxon>
    </lineage>
</organism>
<name>RPOA_SORBI</name>
<keyword id="KW-0150">Chloroplast</keyword>
<keyword id="KW-0240">DNA-directed RNA polymerase</keyword>
<keyword id="KW-0548">Nucleotidyltransferase</keyword>
<keyword id="KW-0934">Plastid</keyword>
<keyword id="KW-1185">Reference proteome</keyword>
<keyword id="KW-0804">Transcription</keyword>
<keyword id="KW-0808">Transferase</keyword>
<dbReference type="EC" id="2.7.7.6" evidence="1"/>
<dbReference type="EMBL" id="EF115542">
    <property type="protein sequence ID" value="ABK79527.1"/>
    <property type="molecule type" value="Genomic_DNA"/>
</dbReference>
<dbReference type="RefSeq" id="YP_899439.1">
    <property type="nucleotide sequence ID" value="NC_008602.1"/>
</dbReference>
<dbReference type="SMR" id="A1E9V6"/>
<dbReference type="FunCoup" id="A1E9V6">
    <property type="interactions" value="71"/>
</dbReference>
<dbReference type="STRING" id="4558.A1E9V6"/>
<dbReference type="GeneID" id="4549223"/>
<dbReference type="KEGG" id="sbi:4549223"/>
<dbReference type="InParanoid" id="A1E9V6"/>
<dbReference type="OrthoDB" id="723447at2759"/>
<dbReference type="Proteomes" id="UP000000768">
    <property type="component" value="Chloroplast"/>
</dbReference>
<dbReference type="GO" id="GO:0009507">
    <property type="term" value="C:chloroplast"/>
    <property type="evidence" value="ECO:0007669"/>
    <property type="project" value="UniProtKB-SubCell"/>
</dbReference>
<dbReference type="GO" id="GO:0000428">
    <property type="term" value="C:DNA-directed RNA polymerase complex"/>
    <property type="evidence" value="ECO:0007669"/>
    <property type="project" value="UniProtKB-KW"/>
</dbReference>
<dbReference type="GO" id="GO:0005739">
    <property type="term" value="C:mitochondrion"/>
    <property type="evidence" value="ECO:0007669"/>
    <property type="project" value="GOC"/>
</dbReference>
<dbReference type="GO" id="GO:0003677">
    <property type="term" value="F:DNA binding"/>
    <property type="evidence" value="ECO:0007669"/>
    <property type="project" value="UniProtKB-UniRule"/>
</dbReference>
<dbReference type="GO" id="GO:0003899">
    <property type="term" value="F:DNA-directed RNA polymerase activity"/>
    <property type="evidence" value="ECO:0007669"/>
    <property type="project" value="UniProtKB-UniRule"/>
</dbReference>
<dbReference type="GO" id="GO:0046983">
    <property type="term" value="F:protein dimerization activity"/>
    <property type="evidence" value="ECO:0007669"/>
    <property type="project" value="InterPro"/>
</dbReference>
<dbReference type="GO" id="GO:0006351">
    <property type="term" value="P:DNA-templated transcription"/>
    <property type="evidence" value="ECO:0007669"/>
    <property type="project" value="UniProtKB-UniRule"/>
</dbReference>
<dbReference type="CDD" id="cd06928">
    <property type="entry name" value="RNAP_alpha_NTD"/>
    <property type="match status" value="1"/>
</dbReference>
<dbReference type="FunFam" id="1.10.150.20:FF:000021">
    <property type="entry name" value="DNA-directed RNA polymerase subunit alpha"/>
    <property type="match status" value="1"/>
</dbReference>
<dbReference type="FunFam" id="2.170.120.12:FF:000001">
    <property type="entry name" value="DNA-directed RNA polymerase subunit alpha"/>
    <property type="match status" value="1"/>
</dbReference>
<dbReference type="Gene3D" id="1.10.150.20">
    <property type="entry name" value="5' to 3' exonuclease, C-terminal subdomain"/>
    <property type="match status" value="1"/>
</dbReference>
<dbReference type="Gene3D" id="2.170.120.12">
    <property type="entry name" value="DNA-directed RNA polymerase, insert domain"/>
    <property type="match status" value="1"/>
</dbReference>
<dbReference type="Gene3D" id="3.30.1360.10">
    <property type="entry name" value="RNA polymerase, RBP11-like subunit"/>
    <property type="match status" value="1"/>
</dbReference>
<dbReference type="HAMAP" id="MF_00059">
    <property type="entry name" value="RNApol_bact_RpoA"/>
    <property type="match status" value="1"/>
</dbReference>
<dbReference type="InterPro" id="IPR011262">
    <property type="entry name" value="DNA-dir_RNA_pol_insert"/>
</dbReference>
<dbReference type="InterPro" id="IPR011263">
    <property type="entry name" value="DNA-dir_RNA_pol_RpoA/D/Rpb3"/>
</dbReference>
<dbReference type="InterPro" id="IPR011773">
    <property type="entry name" value="DNA-dir_RpoA"/>
</dbReference>
<dbReference type="InterPro" id="IPR036603">
    <property type="entry name" value="RBP11-like"/>
</dbReference>
<dbReference type="InterPro" id="IPR011260">
    <property type="entry name" value="RNAP_asu_C"/>
</dbReference>
<dbReference type="InterPro" id="IPR036643">
    <property type="entry name" value="RNApol_insert_sf"/>
</dbReference>
<dbReference type="NCBIfam" id="TIGR02027">
    <property type="entry name" value="rpoA"/>
    <property type="match status" value="1"/>
</dbReference>
<dbReference type="Pfam" id="PF01000">
    <property type="entry name" value="RNA_pol_A_bac"/>
    <property type="match status" value="1"/>
</dbReference>
<dbReference type="Pfam" id="PF03118">
    <property type="entry name" value="RNA_pol_A_CTD"/>
    <property type="match status" value="1"/>
</dbReference>
<dbReference type="Pfam" id="PF01193">
    <property type="entry name" value="RNA_pol_L"/>
    <property type="match status" value="1"/>
</dbReference>
<dbReference type="SMART" id="SM00662">
    <property type="entry name" value="RPOLD"/>
    <property type="match status" value="1"/>
</dbReference>
<dbReference type="SUPFAM" id="SSF47789">
    <property type="entry name" value="C-terminal domain of RNA polymerase alpha subunit"/>
    <property type="match status" value="1"/>
</dbReference>
<dbReference type="SUPFAM" id="SSF56553">
    <property type="entry name" value="Insert subdomain of RNA polymerase alpha subunit"/>
    <property type="match status" value="1"/>
</dbReference>
<dbReference type="SUPFAM" id="SSF55257">
    <property type="entry name" value="RBP11-like subunits of RNA polymerase"/>
    <property type="match status" value="1"/>
</dbReference>
<evidence type="ECO:0000255" key="1">
    <source>
        <dbReference type="HAMAP-Rule" id="MF_00059"/>
    </source>
</evidence>
<comment type="function">
    <text evidence="1">DNA-dependent RNA polymerase catalyzes the transcription of DNA into RNA using the four ribonucleoside triphosphates as substrates.</text>
</comment>
<comment type="catalytic activity">
    <reaction evidence="1">
        <text>RNA(n) + a ribonucleoside 5'-triphosphate = RNA(n+1) + diphosphate</text>
        <dbReference type="Rhea" id="RHEA:21248"/>
        <dbReference type="Rhea" id="RHEA-COMP:14527"/>
        <dbReference type="Rhea" id="RHEA-COMP:17342"/>
        <dbReference type="ChEBI" id="CHEBI:33019"/>
        <dbReference type="ChEBI" id="CHEBI:61557"/>
        <dbReference type="ChEBI" id="CHEBI:140395"/>
        <dbReference type="EC" id="2.7.7.6"/>
    </reaction>
</comment>
<comment type="subunit">
    <text evidence="1">In plastids the minimal PEP RNA polymerase catalytic core is composed of four subunits: alpha, beta, beta', and beta''. When a (nuclear-encoded) sigma factor is associated with the core the holoenzyme is formed, which can initiate transcription.</text>
</comment>
<comment type="subcellular location">
    <subcellularLocation>
        <location>Plastid</location>
        <location>Chloroplast</location>
    </subcellularLocation>
</comment>
<comment type="domain">
    <text evidence="1">The N-terminal domain is essential for RNAP assembly and basal transcription, whereas the C-terminal domain is involved in interaction with transcriptional regulators and with upstream promoter elements.</text>
</comment>
<comment type="similarity">
    <text evidence="1">Belongs to the RNA polymerase alpha chain family.</text>
</comment>
<sequence>MVREEITGSTQKLEWKCVESRVDSKRLYYGRFILSPLRKGQADTVGIALRRALLGEIEGTCITRAKFGNVPHEYSTIVGIEESIQEILLNLKEIVLRSNLYGVRDASICVKGPRYITAQDIILPPSVEIVDTAQPIANLREPIDFCIELQIKRDRGYHTELRKNSQDGSYPIDAVFMPVRNVNYSIFSCGNGNEKHEILFLEIWTNGSLTPKEALYEASRNLIDLFLPFIHTEEEGTSFEESKNRLTPPLLTFQKRFTNLKKNKKGIPLNCIFIDQLELPSRTYNCLKRANIHTLLDLLSKTEEDLMRINSFRMEDGKLIWDTLEKHLPIDLPKNKFSL</sequence>
<geneLocation type="chloroplast"/>
<reference key="1">
    <citation type="journal article" date="2007" name="Theor. Appl. Genet.">
        <title>Complete chloroplast genome sequences of Hordeum vulgare, Sorghum bicolor and Agrostis stolonifera, and comparative analyses with other grass genomes.</title>
        <authorList>
            <person name="Saski C."/>
            <person name="Lee S.-B."/>
            <person name="Fjellheim S."/>
            <person name="Guda C."/>
            <person name="Jansen R.K."/>
            <person name="Luo H."/>
            <person name="Tomkins J."/>
            <person name="Rognli O.A."/>
            <person name="Daniell H."/>
            <person name="Clarke J.L."/>
        </authorList>
    </citation>
    <scope>NUCLEOTIDE SEQUENCE [LARGE SCALE GENOMIC DNA]</scope>
    <source>
        <strain>cv. BTx623</strain>
    </source>
</reference>
<protein>
    <recommendedName>
        <fullName evidence="1">DNA-directed RNA polymerase subunit alpha</fullName>
        <shortName evidence="1">PEP</shortName>
        <ecNumber evidence="1">2.7.7.6</ecNumber>
    </recommendedName>
    <alternativeName>
        <fullName evidence="1">Plastid-encoded RNA polymerase subunit alpha</fullName>
        <shortName evidence="1">RNA polymerase subunit alpha</shortName>
    </alternativeName>
</protein>
<accession>A1E9V6</accession>